<accession>Q6GII7</accession>
<gene>
    <name evidence="1" type="primary">aroD</name>
    <name type="ordered locus">SAR0860</name>
</gene>
<protein>
    <recommendedName>
        <fullName evidence="1">3-dehydroquinate dehydratase</fullName>
        <shortName evidence="1">3-dehydroquinase</shortName>
        <ecNumber evidence="1">4.2.1.10</ecNumber>
    </recommendedName>
    <alternativeName>
        <fullName evidence="1">Type I DHQase</fullName>
    </alternativeName>
    <alternativeName>
        <fullName evidence="1">Type I dehydroquinase</fullName>
        <shortName evidence="1">DHQ1</shortName>
    </alternativeName>
</protein>
<organism>
    <name type="scientific">Staphylococcus aureus (strain MRSA252)</name>
    <dbReference type="NCBI Taxonomy" id="282458"/>
    <lineage>
        <taxon>Bacteria</taxon>
        <taxon>Bacillati</taxon>
        <taxon>Bacillota</taxon>
        <taxon>Bacilli</taxon>
        <taxon>Bacillales</taxon>
        <taxon>Staphylococcaceae</taxon>
        <taxon>Staphylococcus</taxon>
    </lineage>
</organism>
<proteinExistence type="evidence at protein level"/>
<comment type="function">
    <text evidence="1">Involved in the third step of the chorismate pathway, which leads to the biosynthesis of aromatic amino acids. Catalyzes the cis-dehydration of 3-dehydroquinate (DHQ) and introduces the first double bond of the aromatic ring to yield 3-dehydroshikimate.</text>
</comment>
<comment type="catalytic activity">
    <reaction evidence="1">
        <text>3-dehydroquinate = 3-dehydroshikimate + H2O</text>
        <dbReference type="Rhea" id="RHEA:21096"/>
        <dbReference type="ChEBI" id="CHEBI:15377"/>
        <dbReference type="ChEBI" id="CHEBI:16630"/>
        <dbReference type="ChEBI" id="CHEBI:32364"/>
        <dbReference type="EC" id="4.2.1.10"/>
    </reaction>
</comment>
<comment type="pathway">
    <text evidence="1">Metabolic intermediate biosynthesis; chorismate biosynthesis; chorismate from D-erythrose 4-phosphate and phosphoenolpyruvate: step 3/7.</text>
</comment>
<comment type="subunit">
    <text evidence="1 2">Homodimer.</text>
</comment>
<comment type="similarity">
    <text evidence="1">Belongs to the type-I 3-dehydroquinase family.</text>
</comment>
<dbReference type="EC" id="4.2.1.10" evidence="1"/>
<dbReference type="EMBL" id="BX571856">
    <property type="protein sequence ID" value="CAG39869.1"/>
    <property type="molecule type" value="Genomic_DNA"/>
</dbReference>
<dbReference type="RefSeq" id="WP_000150036.1">
    <property type="nucleotide sequence ID" value="NC_002952.2"/>
</dbReference>
<dbReference type="PDB" id="1SFJ">
    <property type="method" value="X-ray"/>
    <property type="resolution" value="2.40 A"/>
    <property type="chains" value="A/B=1-238"/>
</dbReference>
<dbReference type="PDB" id="1SFL">
    <property type="method" value="X-ray"/>
    <property type="resolution" value="1.90 A"/>
    <property type="chains" value="A/B=1-238"/>
</dbReference>
<dbReference type="PDBsum" id="1SFJ"/>
<dbReference type="PDBsum" id="1SFL"/>
<dbReference type="SMR" id="Q6GII7"/>
<dbReference type="DrugBank" id="DB04347">
    <property type="generic name" value="3-Dehydroshikimate"/>
</dbReference>
<dbReference type="KEGG" id="sar:SAR0860"/>
<dbReference type="HOGENOM" id="CLU_064444_0_0_9"/>
<dbReference type="UniPathway" id="UPA00053">
    <property type="reaction ID" value="UER00086"/>
</dbReference>
<dbReference type="EvolutionaryTrace" id="Q6GII7"/>
<dbReference type="Proteomes" id="UP000000596">
    <property type="component" value="Chromosome"/>
</dbReference>
<dbReference type="GO" id="GO:0003855">
    <property type="term" value="F:3-dehydroquinate dehydratase activity"/>
    <property type="evidence" value="ECO:0007669"/>
    <property type="project" value="UniProtKB-UniRule"/>
</dbReference>
<dbReference type="GO" id="GO:0046279">
    <property type="term" value="P:3,4-dihydroxybenzoate biosynthetic process"/>
    <property type="evidence" value="ECO:0007669"/>
    <property type="project" value="UniProtKB-ARBA"/>
</dbReference>
<dbReference type="GO" id="GO:0008652">
    <property type="term" value="P:amino acid biosynthetic process"/>
    <property type="evidence" value="ECO:0007669"/>
    <property type="project" value="UniProtKB-KW"/>
</dbReference>
<dbReference type="GO" id="GO:0009073">
    <property type="term" value="P:aromatic amino acid family biosynthetic process"/>
    <property type="evidence" value="ECO:0007669"/>
    <property type="project" value="UniProtKB-KW"/>
</dbReference>
<dbReference type="GO" id="GO:0009423">
    <property type="term" value="P:chorismate biosynthetic process"/>
    <property type="evidence" value="ECO:0007669"/>
    <property type="project" value="UniProtKB-UniRule"/>
</dbReference>
<dbReference type="CDD" id="cd00502">
    <property type="entry name" value="DHQase_I"/>
    <property type="match status" value="1"/>
</dbReference>
<dbReference type="FunFam" id="3.20.20.70:FF:000216">
    <property type="entry name" value="3-dehydroquinate dehydratase"/>
    <property type="match status" value="1"/>
</dbReference>
<dbReference type="Gene3D" id="3.20.20.70">
    <property type="entry name" value="Aldolase class I"/>
    <property type="match status" value="1"/>
</dbReference>
<dbReference type="HAMAP" id="MF_00214">
    <property type="entry name" value="AroD"/>
    <property type="match status" value="1"/>
</dbReference>
<dbReference type="InterPro" id="IPR013785">
    <property type="entry name" value="Aldolase_TIM"/>
</dbReference>
<dbReference type="InterPro" id="IPR001381">
    <property type="entry name" value="DHquinase_I"/>
</dbReference>
<dbReference type="InterPro" id="IPR050146">
    <property type="entry name" value="Type-I_3-dehydroquinase"/>
</dbReference>
<dbReference type="NCBIfam" id="TIGR01093">
    <property type="entry name" value="aroD"/>
    <property type="match status" value="1"/>
</dbReference>
<dbReference type="PANTHER" id="PTHR43699">
    <property type="entry name" value="3-DEHYDROQUINATE DEHYDRATASE"/>
    <property type="match status" value="1"/>
</dbReference>
<dbReference type="PANTHER" id="PTHR43699:SF1">
    <property type="entry name" value="3-DEHYDROQUINATE DEHYDRATASE"/>
    <property type="match status" value="1"/>
</dbReference>
<dbReference type="Pfam" id="PF01487">
    <property type="entry name" value="DHquinase_I"/>
    <property type="match status" value="1"/>
</dbReference>
<dbReference type="SUPFAM" id="SSF51569">
    <property type="entry name" value="Aldolase"/>
    <property type="match status" value="1"/>
</dbReference>
<evidence type="ECO:0000255" key="1">
    <source>
        <dbReference type="HAMAP-Rule" id="MF_00214"/>
    </source>
</evidence>
<evidence type="ECO:0000269" key="2">
    <source>
    </source>
</evidence>
<evidence type="ECO:0007829" key="3">
    <source>
        <dbReference type="PDB" id="1SFL"/>
    </source>
</evidence>
<sequence>MTHVEVVATITPQLYIEETLIQKINHRIDAIDVLELRIDQFENVTVDQVAEMITKLKVMQDSFKLLVTYRTKLQGGYGQFTNDSYLNLISDLANINGIDMIDIEWQADIDIEKHQRIITHLQQYNKEVIISHHNFESTPPLDELQFIFFKMQKFNPEYVKLAVMPHNKNDVLNLLQAMSTFSDTMDCKVVGISMSKLGLISRTAQGVFGGALTYGCIGEPQAPGQIDVTDLKAQVTLY</sequence>
<name>AROD_STAAR</name>
<keyword id="KW-0002">3D-structure</keyword>
<keyword id="KW-0028">Amino-acid biosynthesis</keyword>
<keyword id="KW-0057">Aromatic amino acid biosynthesis</keyword>
<keyword id="KW-0456">Lyase</keyword>
<keyword id="KW-0704">Schiff base</keyword>
<feature type="chain" id="PRO_0000138811" description="3-dehydroquinate dehydratase">
    <location>
        <begin position="1"/>
        <end position="238"/>
    </location>
</feature>
<feature type="active site" description="Proton donor/acceptor" evidence="1 2">
    <location>
        <position position="133"/>
    </location>
</feature>
<feature type="active site" description="Schiff-base intermediate with substrate" evidence="1 2">
    <location>
        <position position="160"/>
    </location>
</feature>
<feature type="binding site" evidence="1">
    <location>
        <begin position="35"/>
        <end position="37"/>
    </location>
    <ligand>
        <name>3-dehydroquinate</name>
        <dbReference type="ChEBI" id="CHEBI:32364"/>
    </ligand>
</feature>
<feature type="binding site" evidence="1 2">
    <location>
        <position position="70"/>
    </location>
    <ligand>
        <name>3-dehydroquinate</name>
        <dbReference type="ChEBI" id="CHEBI:32364"/>
    </ligand>
</feature>
<feature type="binding site" evidence="1 2">
    <location>
        <position position="202"/>
    </location>
    <ligand>
        <name>3-dehydroquinate</name>
        <dbReference type="ChEBI" id="CHEBI:32364"/>
    </ligand>
</feature>
<feature type="binding site" evidence="1 2">
    <location>
        <position position="225"/>
    </location>
    <ligand>
        <name>3-dehydroquinate</name>
        <dbReference type="ChEBI" id="CHEBI:32364"/>
    </ligand>
</feature>
<feature type="strand" evidence="3">
    <location>
        <begin position="5"/>
        <end position="10"/>
    </location>
</feature>
<feature type="helix" evidence="3">
    <location>
        <begin position="19"/>
        <end position="26"/>
    </location>
</feature>
<feature type="turn" evidence="3">
    <location>
        <begin position="27"/>
        <end position="30"/>
    </location>
</feature>
<feature type="strand" evidence="3">
    <location>
        <begin position="32"/>
        <end position="37"/>
    </location>
</feature>
<feature type="helix" evidence="3">
    <location>
        <begin position="46"/>
        <end position="56"/>
    </location>
</feature>
<feature type="strand" evidence="3">
    <location>
        <begin position="63"/>
        <end position="68"/>
    </location>
</feature>
<feature type="helix" evidence="3">
    <location>
        <begin position="72"/>
        <end position="74"/>
    </location>
</feature>
<feature type="helix" evidence="3">
    <location>
        <begin position="82"/>
        <end position="91"/>
    </location>
</feature>
<feature type="helix" evidence="3">
    <location>
        <begin position="92"/>
        <end position="94"/>
    </location>
</feature>
<feature type="strand" evidence="3">
    <location>
        <begin position="100"/>
        <end position="104"/>
    </location>
</feature>
<feature type="helix" evidence="3">
    <location>
        <begin position="111"/>
        <end position="123"/>
    </location>
</feature>
<feature type="strand" evidence="3">
    <location>
        <begin position="127"/>
        <end position="136"/>
    </location>
</feature>
<feature type="helix" evidence="3">
    <location>
        <begin position="141"/>
        <end position="152"/>
    </location>
</feature>
<feature type="strand" evidence="3">
    <location>
        <begin position="157"/>
        <end position="163"/>
    </location>
</feature>
<feature type="helix" evidence="3">
    <location>
        <begin position="168"/>
        <end position="184"/>
    </location>
</feature>
<feature type="strand" evidence="3">
    <location>
        <begin position="186"/>
        <end position="193"/>
    </location>
</feature>
<feature type="helix" evidence="3">
    <location>
        <begin position="196"/>
        <end position="198"/>
    </location>
</feature>
<feature type="helix" evidence="3">
    <location>
        <begin position="199"/>
        <end position="203"/>
    </location>
</feature>
<feature type="helix" evidence="3">
    <location>
        <begin position="205"/>
        <end position="208"/>
    </location>
</feature>
<feature type="strand" evidence="3">
    <location>
        <begin position="212"/>
        <end position="218"/>
    </location>
</feature>
<feature type="helix" evidence="3">
    <location>
        <begin position="228"/>
        <end position="235"/>
    </location>
</feature>
<reference key="1">
    <citation type="journal article" date="2004" name="Proc. Natl. Acad. Sci. U.S.A.">
        <title>Complete genomes of two clinical Staphylococcus aureus strains: evidence for the rapid evolution of virulence and drug resistance.</title>
        <authorList>
            <person name="Holden M.T.G."/>
            <person name="Feil E.J."/>
            <person name="Lindsay J.A."/>
            <person name="Peacock S.J."/>
            <person name="Day N.P.J."/>
            <person name="Enright M.C."/>
            <person name="Foster T.J."/>
            <person name="Moore C.E."/>
            <person name="Hurst L."/>
            <person name="Atkin R."/>
            <person name="Barron A."/>
            <person name="Bason N."/>
            <person name="Bentley S.D."/>
            <person name="Chillingworth C."/>
            <person name="Chillingworth T."/>
            <person name="Churcher C."/>
            <person name="Clark L."/>
            <person name="Corton C."/>
            <person name="Cronin A."/>
            <person name="Doggett J."/>
            <person name="Dowd L."/>
            <person name="Feltwell T."/>
            <person name="Hance Z."/>
            <person name="Harris B."/>
            <person name="Hauser H."/>
            <person name="Holroyd S."/>
            <person name="Jagels K."/>
            <person name="James K.D."/>
            <person name="Lennard N."/>
            <person name="Line A."/>
            <person name="Mayes R."/>
            <person name="Moule S."/>
            <person name="Mungall K."/>
            <person name="Ormond D."/>
            <person name="Quail M.A."/>
            <person name="Rabbinowitsch E."/>
            <person name="Rutherford K.M."/>
            <person name="Sanders M."/>
            <person name="Sharp S."/>
            <person name="Simmonds M."/>
            <person name="Stevens K."/>
            <person name="Whitehead S."/>
            <person name="Barrell B.G."/>
            <person name="Spratt B.G."/>
            <person name="Parkhill J."/>
        </authorList>
    </citation>
    <scope>NUCLEOTIDE SEQUENCE [LARGE SCALE GENOMIC DNA]</scope>
    <source>
        <strain>MRSA252</strain>
    </source>
</reference>
<reference key="2">
    <citation type="journal article" date="2004" name="Proteins">
        <title>Crystal structures of Staphylococcus aureus type I dehydroquinase from enzyme turnover experiments.</title>
        <authorList>
            <person name="Nichols C.E."/>
            <person name="Lockyer M."/>
            <person name="Hawkins A.R."/>
            <person name="Stammers D.K."/>
        </authorList>
    </citation>
    <scope>X-RAY CRYSTALLOGRAPHY (2.40 ANGSTROMS) IN COMPLEX WITH 3-DEHYDROSHIKIMATE</scope>
    <scope>ACTIVE SITE</scope>
    <scope>SUBUNIT</scope>
    <source>
        <strain>MRSA252</strain>
    </source>
</reference>